<name>ACTT2_BOVIN</name>
<gene>
    <name type="primary">ACTRT2</name>
</gene>
<protein>
    <recommendedName>
        <fullName>Actin-related protein T2</fullName>
        <shortName>ARP-T2</shortName>
    </recommendedName>
</protein>
<organism>
    <name type="scientific">Bos taurus</name>
    <name type="common">Bovine</name>
    <dbReference type="NCBI Taxonomy" id="9913"/>
    <lineage>
        <taxon>Eukaryota</taxon>
        <taxon>Metazoa</taxon>
        <taxon>Chordata</taxon>
        <taxon>Craniata</taxon>
        <taxon>Vertebrata</taxon>
        <taxon>Euteleostomi</taxon>
        <taxon>Mammalia</taxon>
        <taxon>Eutheria</taxon>
        <taxon>Laurasiatheria</taxon>
        <taxon>Artiodactyla</taxon>
        <taxon>Ruminantia</taxon>
        <taxon>Pecora</taxon>
        <taxon>Bovidae</taxon>
        <taxon>Bovinae</taxon>
        <taxon>Bos</taxon>
    </lineage>
</organism>
<dbReference type="EMBL" id="BC111125">
    <property type="protein sequence ID" value="AAI11126.1"/>
    <property type="molecule type" value="mRNA"/>
</dbReference>
<dbReference type="RefSeq" id="NP_001033204.1">
    <property type="nucleotide sequence ID" value="NM_001038115.1"/>
</dbReference>
<dbReference type="SMR" id="Q2TA43"/>
<dbReference type="FunCoup" id="Q2TA43">
    <property type="interactions" value="95"/>
</dbReference>
<dbReference type="STRING" id="9913.ENSBTAP00000023844"/>
<dbReference type="PaxDb" id="9913-ENSBTAP00000023844"/>
<dbReference type="Ensembl" id="ENSBTAT00000023844.6">
    <property type="protein sequence ID" value="ENSBTAP00000023844.5"/>
    <property type="gene ID" value="ENSBTAG00000017929.6"/>
</dbReference>
<dbReference type="GeneID" id="515214"/>
<dbReference type="KEGG" id="bta:515214"/>
<dbReference type="CTD" id="140625"/>
<dbReference type="VEuPathDB" id="HostDB:ENSBTAG00000017929"/>
<dbReference type="VGNC" id="VGNC:25590">
    <property type="gene designation" value="ACTRT2"/>
</dbReference>
<dbReference type="eggNOG" id="KOG0676">
    <property type="taxonomic scope" value="Eukaryota"/>
</dbReference>
<dbReference type="GeneTree" id="ENSGT00940000162911"/>
<dbReference type="HOGENOM" id="CLU_027965_0_2_1"/>
<dbReference type="InParanoid" id="Q2TA43"/>
<dbReference type="OMA" id="DQLYQAP"/>
<dbReference type="OrthoDB" id="10053773at2759"/>
<dbReference type="TreeFam" id="TF354237"/>
<dbReference type="Proteomes" id="UP000009136">
    <property type="component" value="Chromosome 16"/>
</dbReference>
<dbReference type="Bgee" id="ENSBTAG00000017929">
    <property type="expression patterns" value="Expressed in semen and 10 other cell types or tissues"/>
</dbReference>
<dbReference type="GO" id="GO:0015629">
    <property type="term" value="C:actin cytoskeleton"/>
    <property type="evidence" value="ECO:0000318"/>
    <property type="project" value="GO_Central"/>
</dbReference>
<dbReference type="GO" id="GO:0005737">
    <property type="term" value="C:cytoplasm"/>
    <property type="evidence" value="ECO:0007669"/>
    <property type="project" value="UniProtKB-KW"/>
</dbReference>
<dbReference type="CDD" id="cd13397">
    <property type="entry name" value="ASKHA_NBD_actin_Arp-T1-3"/>
    <property type="match status" value="1"/>
</dbReference>
<dbReference type="FunFam" id="3.90.640.10:FF:000007">
    <property type="entry name" value="Actin like 7B"/>
    <property type="match status" value="1"/>
</dbReference>
<dbReference type="FunFam" id="3.30.420.40:FF:000018">
    <property type="entry name" value="Actin-like protein (Centractin)"/>
    <property type="match status" value="1"/>
</dbReference>
<dbReference type="Gene3D" id="3.30.420.40">
    <property type="match status" value="2"/>
</dbReference>
<dbReference type="Gene3D" id="3.90.640.10">
    <property type="entry name" value="Actin, Chain A, domain 4"/>
    <property type="match status" value="1"/>
</dbReference>
<dbReference type="InterPro" id="IPR004000">
    <property type="entry name" value="Actin"/>
</dbReference>
<dbReference type="InterPro" id="IPR043129">
    <property type="entry name" value="ATPase_NBD"/>
</dbReference>
<dbReference type="PANTHER" id="PTHR11937">
    <property type="entry name" value="ACTIN"/>
    <property type="match status" value="1"/>
</dbReference>
<dbReference type="Pfam" id="PF00022">
    <property type="entry name" value="Actin"/>
    <property type="match status" value="1"/>
</dbReference>
<dbReference type="PRINTS" id="PR00190">
    <property type="entry name" value="ACTIN"/>
</dbReference>
<dbReference type="SMART" id="SM00268">
    <property type="entry name" value="ACTIN"/>
    <property type="match status" value="1"/>
</dbReference>
<dbReference type="SUPFAM" id="SSF53067">
    <property type="entry name" value="Actin-like ATPase domain"/>
    <property type="match status" value="2"/>
</dbReference>
<feature type="chain" id="PRO_0000260822" description="Actin-related protein T2">
    <location>
        <begin position="1"/>
        <end position="377"/>
    </location>
</feature>
<accession>Q2TA43</accession>
<evidence type="ECO:0000250" key="1"/>
<evidence type="ECO:0000305" key="2"/>
<keyword id="KW-0963">Cytoplasm</keyword>
<keyword id="KW-0206">Cytoskeleton</keyword>
<keyword id="KW-1185">Reference proteome</keyword>
<proteinExistence type="evidence at transcript level"/>
<comment type="subcellular location">
    <subcellularLocation>
        <location evidence="1">Cytoplasm</location>
        <location evidence="1">Cytoskeleton</location>
    </subcellularLocation>
</comment>
<comment type="similarity">
    <text evidence="2">Belongs to the actin family.</text>
</comment>
<sequence>MFDPHILDSPAVIFDNGSGLCKAGLSGEIGPRHVVSSVVGHPKFKTPLTGANQKKYFVGEEALHRHEVLQLHYPIERGLITGWEDMEKLWKHLFEWELGVKANDQPVLMTEPSLNPRETREKMAEVMFESFNVPAFYLSDQAVLALYASACVTGLVVDSGDGVTCTVPIFEGYSLPHAVTKLYVAGRDITEHLTRLLLASGRTFSCVLDKALVDDIKEKLCYVALEPDKELCRRPEEVLREYKLPDGNIVPIGDQLYQAPEALFSPEKLGIQNPGLSKMVSCSITKCDADIQKTLYGEIVLSGGTTLFQGLDDRLLRELEQLASKGTPIKITAPPDRWFSTWIGASIVTSLSSFKQMWVTSADFKEFGTSVIQRRCF</sequence>
<reference key="1">
    <citation type="submission" date="2005-12" db="EMBL/GenBank/DDBJ databases">
        <authorList>
            <consortium name="NIH - Mammalian Gene Collection (MGC) project"/>
        </authorList>
    </citation>
    <scope>NUCLEOTIDE SEQUENCE [LARGE SCALE MRNA]</scope>
    <source>
        <strain>Crossbred X Angus</strain>
        <tissue>Liver</tissue>
    </source>
</reference>